<proteinExistence type="evidence at protein level"/>
<organism>
    <name type="scientific">Shigella flexneri</name>
    <dbReference type="NCBI Taxonomy" id="623"/>
    <lineage>
        <taxon>Bacteria</taxon>
        <taxon>Pseudomonadati</taxon>
        <taxon>Pseudomonadota</taxon>
        <taxon>Gammaproteobacteria</taxon>
        <taxon>Enterobacterales</taxon>
        <taxon>Enterobacteriaceae</taxon>
        <taxon>Shigella</taxon>
    </lineage>
</organism>
<keyword id="KW-0002">3D-structure</keyword>
<keyword id="KW-0093">Biotin biosynthesis</keyword>
<keyword id="KW-0963">Cytoplasm</keyword>
<keyword id="KW-0378">Hydrolase</keyword>
<keyword id="KW-1185">Reference proteome</keyword>
<keyword id="KW-0719">Serine esterase</keyword>
<sequence length="262" mass="29148">MNNIWWQTKGQGNVHLVLLHGWGLNAEVWRCIDEELSSHFTLHLVDLPGFGRSRGFGALSLADMAEAVLQQAPDKAIWLGWSLGGLVASQIALTHPERVQALVTVASSPCFSARDEWPGIKPDVLAGFQQQLSDDFQRTVERFLALQTMGTETARQDARALKKTVLALPMPEVDVLNGGLEILKTVDLRQPLQNVSMPFLRLYGYLDGLVPRKVVPMLDKLWPHSESYIFAKAAHAPFISHPVEFCHLLVALKQRVLVVSES</sequence>
<feature type="chain" id="PRO_0000204494" description="Pimeloyl-[acyl-carrier protein] methyl ester esterase">
    <location>
        <begin position="1"/>
        <end position="262"/>
    </location>
</feature>
<feature type="domain" description="AB hydrolase-1" evidence="1">
    <location>
        <begin position="15"/>
        <end position="242"/>
    </location>
</feature>
<feature type="active site" description="Nucleophile" evidence="2">
    <location>
        <position position="82"/>
    </location>
</feature>
<feature type="active site" evidence="2">
    <location>
        <position position="207"/>
    </location>
</feature>
<feature type="active site" evidence="2">
    <location>
        <position position="235"/>
    </location>
</feature>
<feature type="binding site" evidence="2">
    <location>
        <position position="22"/>
    </location>
    <ligand>
        <name>substrate</name>
    </ligand>
</feature>
<feature type="binding site" evidence="2">
    <location>
        <begin position="82"/>
        <end position="83"/>
    </location>
    <ligand>
        <name>substrate</name>
    </ligand>
</feature>
<feature type="binding site" evidence="2">
    <location>
        <begin position="143"/>
        <end position="147"/>
    </location>
    <ligand>
        <name>substrate</name>
    </ligand>
</feature>
<feature type="binding site" evidence="2">
    <location>
        <position position="235"/>
    </location>
    <ligand>
        <name>substrate</name>
    </ligand>
</feature>
<feature type="strand" evidence="3">
    <location>
        <begin position="6"/>
        <end position="9"/>
    </location>
</feature>
<feature type="strand" evidence="3">
    <location>
        <begin position="13"/>
        <end position="19"/>
    </location>
</feature>
<feature type="helix" evidence="3">
    <location>
        <begin position="26"/>
        <end position="31"/>
    </location>
</feature>
<feature type="helix" evidence="3">
    <location>
        <begin position="33"/>
        <end position="37"/>
    </location>
</feature>
<feature type="strand" evidence="3">
    <location>
        <begin position="40"/>
        <end position="45"/>
    </location>
</feature>
<feature type="helix" evidence="3">
    <location>
        <begin position="61"/>
        <end position="69"/>
    </location>
</feature>
<feature type="strand" evidence="3">
    <location>
        <begin position="74"/>
        <end position="81"/>
    </location>
</feature>
<feature type="helix" evidence="3">
    <location>
        <begin position="83"/>
        <end position="94"/>
    </location>
</feature>
<feature type="helix" evidence="3">
    <location>
        <begin position="96"/>
        <end position="98"/>
    </location>
</feature>
<feature type="strand" evidence="3">
    <location>
        <begin position="99"/>
        <end position="106"/>
    </location>
</feature>
<feature type="helix" evidence="3">
    <location>
        <begin position="122"/>
        <end position="133"/>
    </location>
</feature>
<feature type="helix" evidence="3">
    <location>
        <begin position="136"/>
        <end position="148"/>
    </location>
</feature>
<feature type="helix" evidence="3">
    <location>
        <begin position="154"/>
        <end position="167"/>
    </location>
</feature>
<feature type="helix" evidence="3">
    <location>
        <begin position="173"/>
        <end position="185"/>
    </location>
</feature>
<feature type="helix" evidence="3">
    <location>
        <begin position="191"/>
        <end position="194"/>
    </location>
</feature>
<feature type="strand" evidence="3">
    <location>
        <begin position="199"/>
        <end position="204"/>
    </location>
</feature>
<feature type="strand" evidence="3">
    <location>
        <begin position="208"/>
        <end position="210"/>
    </location>
</feature>
<feature type="helix" evidence="3">
    <location>
        <begin position="214"/>
        <end position="221"/>
    </location>
</feature>
<feature type="strand" evidence="3">
    <location>
        <begin position="225"/>
        <end position="230"/>
    </location>
</feature>
<feature type="helix" evidence="3">
    <location>
        <begin position="237"/>
        <end position="240"/>
    </location>
</feature>
<feature type="helix" evidence="3">
    <location>
        <begin position="242"/>
        <end position="256"/>
    </location>
</feature>
<comment type="function">
    <text evidence="2">The physiological role of BioH is to remove the methyl group introduced by BioC when the pimeloyl moiety is complete. It allows to synthesize pimeloyl-ACP via the fatty acid synthetic pathway through the hydrolysis of the ester bonds of pimeloyl-ACP esters.</text>
</comment>
<comment type="catalytic activity">
    <reaction evidence="2">
        <text>6-carboxyhexanoyl-[ACP] methyl ester + H2O = 6-carboxyhexanoyl-[ACP] + methanol + H(+)</text>
        <dbReference type="Rhea" id="RHEA:42700"/>
        <dbReference type="Rhea" id="RHEA-COMP:9955"/>
        <dbReference type="Rhea" id="RHEA-COMP:10186"/>
        <dbReference type="ChEBI" id="CHEBI:15377"/>
        <dbReference type="ChEBI" id="CHEBI:15378"/>
        <dbReference type="ChEBI" id="CHEBI:17790"/>
        <dbReference type="ChEBI" id="CHEBI:78846"/>
        <dbReference type="ChEBI" id="CHEBI:82735"/>
        <dbReference type="EC" id="3.1.1.85"/>
    </reaction>
</comment>
<comment type="pathway">
    <text evidence="2">Cofactor biosynthesis; biotin biosynthesis.</text>
</comment>
<comment type="subunit">
    <text evidence="2">Monomer.</text>
</comment>
<comment type="subcellular location">
    <subcellularLocation>
        <location evidence="2">Cytoplasm</location>
    </subcellularLocation>
</comment>
<comment type="similarity">
    <text evidence="2">Belongs to the AB hydrolase superfamily. Carboxylesterase BioH family.</text>
</comment>
<protein>
    <recommendedName>
        <fullName evidence="2">Pimeloyl-[acyl-carrier protein] methyl ester esterase</fullName>
        <ecNumber evidence="2">3.1.1.85</ecNumber>
    </recommendedName>
    <alternativeName>
        <fullName evidence="2">Biotin synthesis protein BioH</fullName>
    </alternativeName>
    <alternativeName>
        <fullName evidence="2">Carboxylesterase BioH</fullName>
    </alternativeName>
</protein>
<reference key="1">
    <citation type="journal article" date="2002" name="Nucleic Acids Res.">
        <title>Genome sequence of Shigella flexneri 2a: insights into pathogenicity through comparison with genomes of Escherichia coli K12 and O157.</title>
        <authorList>
            <person name="Jin Q."/>
            <person name="Yuan Z."/>
            <person name="Xu J."/>
            <person name="Wang Y."/>
            <person name="Shen Y."/>
            <person name="Lu W."/>
            <person name="Wang J."/>
            <person name="Liu H."/>
            <person name="Yang J."/>
            <person name="Yang F."/>
            <person name="Zhang X."/>
            <person name="Zhang J."/>
            <person name="Yang G."/>
            <person name="Wu H."/>
            <person name="Qu D."/>
            <person name="Dong J."/>
            <person name="Sun L."/>
            <person name="Xue Y."/>
            <person name="Zhao A."/>
            <person name="Gao Y."/>
            <person name="Zhu J."/>
            <person name="Kan B."/>
            <person name="Ding K."/>
            <person name="Chen S."/>
            <person name="Cheng H."/>
            <person name="Yao Z."/>
            <person name="He B."/>
            <person name="Chen R."/>
            <person name="Ma D."/>
            <person name="Qiang B."/>
            <person name="Wen Y."/>
            <person name="Hou Y."/>
            <person name="Yu J."/>
        </authorList>
    </citation>
    <scope>NUCLEOTIDE SEQUENCE [LARGE SCALE GENOMIC DNA]</scope>
    <source>
        <strain>301 / Serotype 2a</strain>
    </source>
</reference>
<reference key="2">
    <citation type="journal article" date="2003" name="Infect. Immun.">
        <title>Complete genome sequence and comparative genomics of Shigella flexneri serotype 2a strain 2457T.</title>
        <authorList>
            <person name="Wei J."/>
            <person name="Goldberg M.B."/>
            <person name="Burland V."/>
            <person name="Venkatesan M.M."/>
            <person name="Deng W."/>
            <person name="Fournier G."/>
            <person name="Mayhew G.F."/>
            <person name="Plunkett G. III"/>
            <person name="Rose D.J."/>
            <person name="Darling A."/>
            <person name="Mau B."/>
            <person name="Perna N.T."/>
            <person name="Payne S.M."/>
            <person name="Runyen-Janecky L.J."/>
            <person name="Zhou S."/>
            <person name="Schwartz D.C."/>
            <person name="Blattner F.R."/>
        </authorList>
    </citation>
    <scope>NUCLEOTIDE SEQUENCE [LARGE SCALE GENOMIC DNA]</scope>
    <source>
        <strain>ATCC 700930 / 2457T / Serotype 2a</strain>
    </source>
</reference>
<evidence type="ECO:0000255" key="1"/>
<evidence type="ECO:0000255" key="2">
    <source>
        <dbReference type="HAMAP-Rule" id="MF_01260"/>
    </source>
</evidence>
<evidence type="ECO:0007829" key="3">
    <source>
        <dbReference type="PDB" id="4ETW"/>
    </source>
</evidence>
<dbReference type="EC" id="3.1.1.85" evidence="2"/>
<dbReference type="EMBL" id="AE005674">
    <property type="protein sequence ID" value="AAN44896.2"/>
    <property type="molecule type" value="Genomic_DNA"/>
</dbReference>
<dbReference type="EMBL" id="AE014073">
    <property type="protein sequence ID" value="AAP19285.1"/>
    <property type="molecule type" value="Genomic_DNA"/>
</dbReference>
<dbReference type="RefSeq" id="NP_709189.2">
    <property type="nucleotide sequence ID" value="NC_004337.2"/>
</dbReference>
<dbReference type="RefSeq" id="WP_001060072.1">
    <property type="nucleotide sequence ID" value="NZ_WPGW01000066.1"/>
</dbReference>
<dbReference type="PDB" id="4ETW">
    <property type="method" value="X-ray"/>
    <property type="resolution" value="2.05 A"/>
    <property type="chains" value="A/C=1-257"/>
</dbReference>
<dbReference type="PDBsum" id="4ETW"/>
<dbReference type="SMR" id="Q83PW0"/>
<dbReference type="STRING" id="198214.SF3435"/>
<dbReference type="ESTHER" id="shifl-BIOH">
    <property type="family name" value="BioH"/>
</dbReference>
<dbReference type="PaxDb" id="198214-SF3435"/>
<dbReference type="GeneID" id="1026527"/>
<dbReference type="KEGG" id="sfl:SF3435"/>
<dbReference type="KEGG" id="sfx:S4329"/>
<dbReference type="PATRIC" id="fig|198214.7.peg.4052"/>
<dbReference type="HOGENOM" id="CLU_020336_12_2_6"/>
<dbReference type="BRENDA" id="3.1.1.85">
    <property type="organism ID" value="5712"/>
</dbReference>
<dbReference type="UniPathway" id="UPA00078"/>
<dbReference type="EvolutionaryTrace" id="Q83PW0"/>
<dbReference type="Proteomes" id="UP000001006">
    <property type="component" value="Chromosome"/>
</dbReference>
<dbReference type="Proteomes" id="UP000002673">
    <property type="component" value="Chromosome"/>
</dbReference>
<dbReference type="GO" id="GO:0005737">
    <property type="term" value="C:cytoplasm"/>
    <property type="evidence" value="ECO:0007669"/>
    <property type="project" value="UniProtKB-SubCell"/>
</dbReference>
<dbReference type="GO" id="GO:0090499">
    <property type="term" value="F:pimelyl-[acyl-carrier protein] methyl ester esterase activity"/>
    <property type="evidence" value="ECO:0007669"/>
    <property type="project" value="UniProtKB-EC"/>
</dbReference>
<dbReference type="GO" id="GO:0009102">
    <property type="term" value="P:biotin biosynthetic process"/>
    <property type="evidence" value="ECO:0007669"/>
    <property type="project" value="UniProtKB-UniRule"/>
</dbReference>
<dbReference type="FunFam" id="3.40.50.1820:FF:000045">
    <property type="entry name" value="Pimeloyl-[acyl-carrier protein] methyl ester esterase"/>
    <property type="match status" value="1"/>
</dbReference>
<dbReference type="Gene3D" id="3.40.50.1820">
    <property type="entry name" value="alpha/beta hydrolase"/>
    <property type="match status" value="1"/>
</dbReference>
<dbReference type="HAMAP" id="MF_01260">
    <property type="entry name" value="Carboxylester"/>
    <property type="match status" value="1"/>
</dbReference>
<dbReference type="InterPro" id="IPR000073">
    <property type="entry name" value="AB_hydrolase_1"/>
</dbReference>
<dbReference type="InterPro" id="IPR029058">
    <property type="entry name" value="AB_hydrolase_fold"/>
</dbReference>
<dbReference type="InterPro" id="IPR010076">
    <property type="entry name" value="BioH"/>
</dbReference>
<dbReference type="InterPro" id="IPR050228">
    <property type="entry name" value="Carboxylesterase_BioH"/>
</dbReference>
<dbReference type="NCBIfam" id="TIGR01738">
    <property type="entry name" value="bioH"/>
    <property type="match status" value="1"/>
</dbReference>
<dbReference type="NCBIfam" id="NF007674">
    <property type="entry name" value="PRK10349.1"/>
    <property type="match status" value="1"/>
</dbReference>
<dbReference type="PANTHER" id="PTHR43194">
    <property type="entry name" value="HYDROLASE ALPHA/BETA FOLD FAMILY"/>
    <property type="match status" value="1"/>
</dbReference>
<dbReference type="PANTHER" id="PTHR43194:SF5">
    <property type="entry name" value="PIMELOYL-[ACYL-CARRIER PROTEIN] METHYL ESTER ESTERASE"/>
    <property type="match status" value="1"/>
</dbReference>
<dbReference type="Pfam" id="PF00561">
    <property type="entry name" value="Abhydrolase_1"/>
    <property type="match status" value="1"/>
</dbReference>
<dbReference type="SUPFAM" id="SSF53474">
    <property type="entry name" value="alpha/beta-Hydrolases"/>
    <property type="match status" value="1"/>
</dbReference>
<gene>
    <name evidence="2" type="primary">bioH</name>
    <name type="ordered locus">SF3435</name>
    <name type="ordered locus">S4329</name>
</gene>
<accession>Q83PW0</accession>
<accession>Q7UAT4</accession>
<name>BIOH_SHIFL</name>